<proteinExistence type="inferred from homology"/>
<protein>
    <recommendedName>
        <fullName>Probable glucose uptake protein GlcU</fullName>
    </recommendedName>
</protein>
<accession>Q6G765</accession>
<dbReference type="EMBL" id="BX571857">
    <property type="protein sequence ID" value="CAG43958.1"/>
    <property type="molecule type" value="Genomic_DNA"/>
</dbReference>
<dbReference type="RefSeq" id="WP_001159898.1">
    <property type="nucleotide sequence ID" value="NC_002953.3"/>
</dbReference>
<dbReference type="KEGG" id="sas:SAS2147"/>
<dbReference type="HOGENOM" id="CLU_076024_0_0_9"/>
<dbReference type="GO" id="GO:0005886">
    <property type="term" value="C:plasma membrane"/>
    <property type="evidence" value="ECO:0007669"/>
    <property type="project" value="UniProtKB-SubCell"/>
</dbReference>
<dbReference type="GO" id="GO:0015144">
    <property type="term" value="F:carbohydrate transmembrane transporter activity"/>
    <property type="evidence" value="ECO:0007669"/>
    <property type="project" value="InterPro"/>
</dbReference>
<dbReference type="InterPro" id="IPR010651">
    <property type="entry name" value="Sugar_transport"/>
</dbReference>
<dbReference type="PANTHER" id="PTHR16119">
    <property type="entry name" value="TRANSMEMBRANE PROTEIN 144"/>
    <property type="match status" value="1"/>
</dbReference>
<dbReference type="PANTHER" id="PTHR16119:SF17">
    <property type="entry name" value="TRANSMEMBRANE PROTEIN 144"/>
    <property type="match status" value="1"/>
</dbReference>
<dbReference type="Pfam" id="PF06800">
    <property type="entry name" value="Sugar_transport"/>
    <property type="match status" value="1"/>
</dbReference>
<dbReference type="SUPFAM" id="SSF103481">
    <property type="entry name" value="Multidrug resistance efflux transporter EmrE"/>
    <property type="match status" value="2"/>
</dbReference>
<name>GLCU_STAAS</name>
<organism>
    <name type="scientific">Staphylococcus aureus (strain MSSA476)</name>
    <dbReference type="NCBI Taxonomy" id="282459"/>
    <lineage>
        <taxon>Bacteria</taxon>
        <taxon>Bacillati</taxon>
        <taxon>Bacillota</taxon>
        <taxon>Bacilli</taxon>
        <taxon>Bacillales</taxon>
        <taxon>Staphylococcaceae</taxon>
        <taxon>Staphylococcus</taxon>
    </lineage>
</organism>
<feature type="chain" id="PRO_0000213628" description="Probable glucose uptake protein GlcU">
    <location>
        <begin position="1"/>
        <end position="287"/>
    </location>
</feature>
<feature type="transmembrane region" description="Helical" evidence="2">
    <location>
        <begin position="7"/>
        <end position="29"/>
    </location>
</feature>
<feature type="transmembrane region" description="Helical" evidence="2">
    <location>
        <begin position="34"/>
        <end position="56"/>
    </location>
</feature>
<feature type="transmembrane region" description="Helical" evidence="2">
    <location>
        <begin position="58"/>
        <end position="75"/>
    </location>
</feature>
<feature type="transmembrane region" description="Helical" evidence="2">
    <location>
        <begin position="114"/>
        <end position="136"/>
    </location>
</feature>
<feature type="transmembrane region" description="Helical" evidence="2">
    <location>
        <begin position="156"/>
        <end position="178"/>
    </location>
</feature>
<feature type="transmembrane region" description="Helical" evidence="2">
    <location>
        <begin position="183"/>
        <end position="202"/>
    </location>
</feature>
<feature type="transmembrane region" description="Helical" evidence="2">
    <location>
        <begin position="209"/>
        <end position="228"/>
    </location>
</feature>
<feature type="transmembrane region" description="Helical" evidence="2">
    <location>
        <begin position="233"/>
        <end position="255"/>
    </location>
</feature>
<feature type="transmembrane region" description="Helical" evidence="2">
    <location>
        <begin position="267"/>
        <end position="286"/>
    </location>
</feature>
<comment type="function">
    <text evidence="1">Involved in the uptake of glucose.</text>
</comment>
<comment type="subcellular location">
    <subcellularLocation>
        <location evidence="3">Cell membrane</location>
        <topology evidence="3">Multi-pass membrane protein</topology>
    </subcellularLocation>
</comment>
<comment type="similarity">
    <text evidence="3">Belongs to the GRP transporter (TC 2.A.7.5) family.</text>
</comment>
<reference key="1">
    <citation type="journal article" date="2004" name="Proc. Natl. Acad. Sci. U.S.A.">
        <title>Complete genomes of two clinical Staphylococcus aureus strains: evidence for the rapid evolution of virulence and drug resistance.</title>
        <authorList>
            <person name="Holden M.T.G."/>
            <person name="Feil E.J."/>
            <person name="Lindsay J.A."/>
            <person name="Peacock S.J."/>
            <person name="Day N.P.J."/>
            <person name="Enright M.C."/>
            <person name="Foster T.J."/>
            <person name="Moore C.E."/>
            <person name="Hurst L."/>
            <person name="Atkin R."/>
            <person name="Barron A."/>
            <person name="Bason N."/>
            <person name="Bentley S.D."/>
            <person name="Chillingworth C."/>
            <person name="Chillingworth T."/>
            <person name="Churcher C."/>
            <person name="Clark L."/>
            <person name="Corton C."/>
            <person name="Cronin A."/>
            <person name="Doggett J."/>
            <person name="Dowd L."/>
            <person name="Feltwell T."/>
            <person name="Hance Z."/>
            <person name="Harris B."/>
            <person name="Hauser H."/>
            <person name="Holroyd S."/>
            <person name="Jagels K."/>
            <person name="James K.D."/>
            <person name="Lennard N."/>
            <person name="Line A."/>
            <person name="Mayes R."/>
            <person name="Moule S."/>
            <person name="Mungall K."/>
            <person name="Ormond D."/>
            <person name="Quail M.A."/>
            <person name="Rabbinowitsch E."/>
            <person name="Rutherford K.M."/>
            <person name="Sanders M."/>
            <person name="Sharp S."/>
            <person name="Simmonds M."/>
            <person name="Stevens K."/>
            <person name="Whitehead S."/>
            <person name="Barrell B.G."/>
            <person name="Spratt B.G."/>
            <person name="Parkhill J."/>
        </authorList>
    </citation>
    <scope>NUCLEOTIDE SEQUENCE [LARGE SCALE GENOMIC DNA]</scope>
    <source>
        <strain>MSSA476</strain>
    </source>
</reference>
<keyword id="KW-1003">Cell membrane</keyword>
<keyword id="KW-0472">Membrane</keyword>
<keyword id="KW-0762">Sugar transport</keyword>
<keyword id="KW-0812">Transmembrane</keyword>
<keyword id="KW-1133">Transmembrane helix</keyword>
<keyword id="KW-0813">Transport</keyword>
<gene>
    <name type="primary">glcU</name>
    <name type="ordered locus">SAS2147</name>
</gene>
<evidence type="ECO:0000250" key="1"/>
<evidence type="ECO:0000255" key="2"/>
<evidence type="ECO:0000305" key="3"/>
<sequence>MQFLDFLIALLPALFWGSVVLINVFVGGGPYNQIRGTTLGALIVGLGLLITGFAKFNNPTVIIVGLISGALWAFGQANQLKSISLIGVSNTMPVSTGMQLVGTTLFSVIFLGEWSSMTQIIFGLIAMILLVTGVALTSLKAKNERQSDNPEFKKAMGILIVSTVGYVGFVVLGDIFGVGGTDALFFQSVGMAIGGFILSMNHKTSLKSTALNLLPGVIWGIGNLFMFYSQPKVGVATSFSLSQLLVIVSTLGGIFILGERKDRRQMTGIWAGIIIIVIAAIILGNLK</sequence>